<name>RNC_VIBA3</name>
<sequence length="225" mass="25147">MNSPIDKLERKIGYQFNDADLIHLALTHRSAAGKHNERLEFLGDSILSFVIADDLYHRFPKVNEGDMSRMRATLVRGHTLAELGREFELGDYLKLGPGELKSGGFRRDSILADAVEAIIGAVYLDSDTEVVRRIILSWYQSRLESIQPGVSQKDPKTRLQEFLQGRRNPLPVYTVTNIKGEAHNQEFTVECEVAGVDKPVIGKGTSRRKAEQAAAETALEQLSNV</sequence>
<keyword id="KW-0963">Cytoplasm</keyword>
<keyword id="KW-0255">Endonuclease</keyword>
<keyword id="KW-0378">Hydrolase</keyword>
<keyword id="KW-0460">Magnesium</keyword>
<keyword id="KW-0479">Metal-binding</keyword>
<keyword id="KW-0507">mRNA processing</keyword>
<keyword id="KW-0540">Nuclease</keyword>
<keyword id="KW-0694">RNA-binding</keyword>
<keyword id="KW-0698">rRNA processing</keyword>
<keyword id="KW-0699">rRNA-binding</keyword>
<keyword id="KW-0819">tRNA processing</keyword>
<gene>
    <name evidence="1" type="primary">rnc</name>
    <name type="ordered locus">VS_2619</name>
</gene>
<dbReference type="EC" id="3.1.26.3" evidence="1"/>
<dbReference type="EMBL" id="FM954972">
    <property type="protein sequence ID" value="CAV19828.1"/>
    <property type="molecule type" value="Genomic_DNA"/>
</dbReference>
<dbReference type="SMR" id="B7VK79"/>
<dbReference type="STRING" id="575788.VS_2619"/>
<dbReference type="KEGG" id="vsp:VS_2619"/>
<dbReference type="eggNOG" id="COG0571">
    <property type="taxonomic scope" value="Bacteria"/>
</dbReference>
<dbReference type="HOGENOM" id="CLU_000907_1_1_6"/>
<dbReference type="Proteomes" id="UP000009100">
    <property type="component" value="Chromosome 1"/>
</dbReference>
<dbReference type="GO" id="GO:0005737">
    <property type="term" value="C:cytoplasm"/>
    <property type="evidence" value="ECO:0007669"/>
    <property type="project" value="UniProtKB-SubCell"/>
</dbReference>
<dbReference type="GO" id="GO:0003725">
    <property type="term" value="F:double-stranded RNA binding"/>
    <property type="evidence" value="ECO:0007669"/>
    <property type="project" value="TreeGrafter"/>
</dbReference>
<dbReference type="GO" id="GO:0046872">
    <property type="term" value="F:metal ion binding"/>
    <property type="evidence" value="ECO:0007669"/>
    <property type="project" value="UniProtKB-KW"/>
</dbReference>
<dbReference type="GO" id="GO:0004525">
    <property type="term" value="F:ribonuclease III activity"/>
    <property type="evidence" value="ECO:0007669"/>
    <property type="project" value="UniProtKB-UniRule"/>
</dbReference>
<dbReference type="GO" id="GO:0019843">
    <property type="term" value="F:rRNA binding"/>
    <property type="evidence" value="ECO:0007669"/>
    <property type="project" value="UniProtKB-KW"/>
</dbReference>
<dbReference type="GO" id="GO:0006397">
    <property type="term" value="P:mRNA processing"/>
    <property type="evidence" value="ECO:0007669"/>
    <property type="project" value="UniProtKB-UniRule"/>
</dbReference>
<dbReference type="GO" id="GO:0010468">
    <property type="term" value="P:regulation of gene expression"/>
    <property type="evidence" value="ECO:0007669"/>
    <property type="project" value="TreeGrafter"/>
</dbReference>
<dbReference type="GO" id="GO:0006364">
    <property type="term" value="P:rRNA processing"/>
    <property type="evidence" value="ECO:0007669"/>
    <property type="project" value="UniProtKB-UniRule"/>
</dbReference>
<dbReference type="GO" id="GO:0008033">
    <property type="term" value="P:tRNA processing"/>
    <property type="evidence" value="ECO:0007669"/>
    <property type="project" value="UniProtKB-KW"/>
</dbReference>
<dbReference type="CDD" id="cd10845">
    <property type="entry name" value="DSRM_RNAse_III_family"/>
    <property type="match status" value="1"/>
</dbReference>
<dbReference type="CDD" id="cd00593">
    <property type="entry name" value="RIBOc"/>
    <property type="match status" value="1"/>
</dbReference>
<dbReference type="FunFam" id="1.10.1520.10:FF:000001">
    <property type="entry name" value="Ribonuclease 3"/>
    <property type="match status" value="1"/>
</dbReference>
<dbReference type="FunFam" id="3.30.160.20:FF:000003">
    <property type="entry name" value="Ribonuclease 3"/>
    <property type="match status" value="1"/>
</dbReference>
<dbReference type="Gene3D" id="3.30.160.20">
    <property type="match status" value="1"/>
</dbReference>
<dbReference type="Gene3D" id="1.10.1520.10">
    <property type="entry name" value="Ribonuclease III domain"/>
    <property type="match status" value="1"/>
</dbReference>
<dbReference type="HAMAP" id="MF_00104">
    <property type="entry name" value="RNase_III"/>
    <property type="match status" value="1"/>
</dbReference>
<dbReference type="InterPro" id="IPR014720">
    <property type="entry name" value="dsRBD_dom"/>
</dbReference>
<dbReference type="InterPro" id="IPR011907">
    <property type="entry name" value="RNase_III"/>
</dbReference>
<dbReference type="InterPro" id="IPR000999">
    <property type="entry name" value="RNase_III_dom"/>
</dbReference>
<dbReference type="InterPro" id="IPR036389">
    <property type="entry name" value="RNase_III_sf"/>
</dbReference>
<dbReference type="NCBIfam" id="TIGR02191">
    <property type="entry name" value="RNaseIII"/>
    <property type="match status" value="1"/>
</dbReference>
<dbReference type="PANTHER" id="PTHR11207:SF0">
    <property type="entry name" value="RIBONUCLEASE 3"/>
    <property type="match status" value="1"/>
</dbReference>
<dbReference type="PANTHER" id="PTHR11207">
    <property type="entry name" value="RIBONUCLEASE III"/>
    <property type="match status" value="1"/>
</dbReference>
<dbReference type="Pfam" id="PF00035">
    <property type="entry name" value="dsrm"/>
    <property type="match status" value="1"/>
</dbReference>
<dbReference type="Pfam" id="PF14622">
    <property type="entry name" value="Ribonucleas_3_3"/>
    <property type="match status" value="1"/>
</dbReference>
<dbReference type="SMART" id="SM00358">
    <property type="entry name" value="DSRM"/>
    <property type="match status" value="1"/>
</dbReference>
<dbReference type="SMART" id="SM00535">
    <property type="entry name" value="RIBOc"/>
    <property type="match status" value="1"/>
</dbReference>
<dbReference type="SUPFAM" id="SSF54768">
    <property type="entry name" value="dsRNA-binding domain-like"/>
    <property type="match status" value="1"/>
</dbReference>
<dbReference type="SUPFAM" id="SSF69065">
    <property type="entry name" value="RNase III domain-like"/>
    <property type="match status" value="1"/>
</dbReference>
<dbReference type="PROSITE" id="PS50137">
    <property type="entry name" value="DS_RBD"/>
    <property type="match status" value="1"/>
</dbReference>
<dbReference type="PROSITE" id="PS00517">
    <property type="entry name" value="RNASE_3_1"/>
    <property type="match status" value="1"/>
</dbReference>
<dbReference type="PROSITE" id="PS50142">
    <property type="entry name" value="RNASE_3_2"/>
    <property type="match status" value="1"/>
</dbReference>
<comment type="function">
    <text evidence="1">Digests double-stranded RNA. Involved in the processing of primary rRNA transcript to yield the immediate precursors to the large and small rRNAs (23S and 16S). Processes some mRNAs, and tRNAs when they are encoded in the rRNA operon. Processes pre-crRNA and tracrRNA of type II CRISPR loci if present in the organism.</text>
</comment>
<comment type="catalytic activity">
    <reaction evidence="1">
        <text>Endonucleolytic cleavage to 5'-phosphomonoester.</text>
        <dbReference type="EC" id="3.1.26.3"/>
    </reaction>
</comment>
<comment type="cofactor">
    <cofactor evidence="1">
        <name>Mg(2+)</name>
        <dbReference type="ChEBI" id="CHEBI:18420"/>
    </cofactor>
</comment>
<comment type="subunit">
    <text evidence="1">Homodimer.</text>
</comment>
<comment type="subcellular location">
    <subcellularLocation>
        <location evidence="1">Cytoplasm</location>
    </subcellularLocation>
</comment>
<comment type="similarity">
    <text evidence="1">Belongs to the ribonuclease III family.</text>
</comment>
<accession>B7VK79</accession>
<proteinExistence type="inferred from homology"/>
<reference key="1">
    <citation type="submission" date="2009-02" db="EMBL/GenBank/DDBJ databases">
        <title>Vibrio splendidus str. LGP32 complete genome.</title>
        <authorList>
            <person name="Mazel D."/>
            <person name="Le Roux F."/>
        </authorList>
    </citation>
    <scope>NUCLEOTIDE SEQUENCE [LARGE SCALE GENOMIC DNA]</scope>
    <source>
        <strain>LGP32</strain>
    </source>
</reference>
<protein>
    <recommendedName>
        <fullName evidence="1">Ribonuclease 3</fullName>
        <ecNumber evidence="1">3.1.26.3</ecNumber>
    </recommendedName>
    <alternativeName>
        <fullName evidence="1">Ribonuclease III</fullName>
        <shortName evidence="1">RNase III</shortName>
    </alternativeName>
</protein>
<organism>
    <name type="scientific">Vibrio atlanticus (strain LGP32)</name>
    <name type="common">Vibrio splendidus (strain Mel32)</name>
    <dbReference type="NCBI Taxonomy" id="575788"/>
    <lineage>
        <taxon>Bacteria</taxon>
        <taxon>Pseudomonadati</taxon>
        <taxon>Pseudomonadota</taxon>
        <taxon>Gammaproteobacteria</taxon>
        <taxon>Vibrionales</taxon>
        <taxon>Vibrionaceae</taxon>
        <taxon>Vibrio</taxon>
    </lineage>
</organism>
<feature type="chain" id="PRO_1000118942" description="Ribonuclease 3">
    <location>
        <begin position="1"/>
        <end position="225"/>
    </location>
</feature>
<feature type="domain" description="RNase III" evidence="1">
    <location>
        <begin position="5"/>
        <end position="127"/>
    </location>
</feature>
<feature type="domain" description="DRBM" evidence="1">
    <location>
        <begin position="154"/>
        <end position="224"/>
    </location>
</feature>
<feature type="active site" evidence="1">
    <location>
        <position position="44"/>
    </location>
</feature>
<feature type="active site" evidence="1">
    <location>
        <position position="116"/>
    </location>
</feature>
<feature type="binding site" evidence="1">
    <location>
        <position position="40"/>
    </location>
    <ligand>
        <name>Mg(2+)</name>
        <dbReference type="ChEBI" id="CHEBI:18420"/>
    </ligand>
</feature>
<feature type="binding site" evidence="1">
    <location>
        <position position="113"/>
    </location>
    <ligand>
        <name>Mg(2+)</name>
        <dbReference type="ChEBI" id="CHEBI:18420"/>
    </ligand>
</feature>
<feature type="binding site" evidence="1">
    <location>
        <position position="116"/>
    </location>
    <ligand>
        <name>Mg(2+)</name>
        <dbReference type="ChEBI" id="CHEBI:18420"/>
    </ligand>
</feature>
<evidence type="ECO:0000255" key="1">
    <source>
        <dbReference type="HAMAP-Rule" id="MF_00104"/>
    </source>
</evidence>